<name>GCST_EXIS2</name>
<protein>
    <recommendedName>
        <fullName evidence="1">Aminomethyltransferase</fullName>
        <ecNumber evidence="1">2.1.2.10</ecNumber>
    </recommendedName>
    <alternativeName>
        <fullName evidence="1">Glycine cleavage system T protein</fullName>
    </alternativeName>
</protein>
<comment type="function">
    <text evidence="1">The glycine cleavage system catalyzes the degradation of glycine.</text>
</comment>
<comment type="catalytic activity">
    <reaction evidence="1">
        <text>N(6)-[(R)-S(8)-aminomethyldihydrolipoyl]-L-lysyl-[protein] + (6S)-5,6,7,8-tetrahydrofolate = N(6)-[(R)-dihydrolipoyl]-L-lysyl-[protein] + (6R)-5,10-methylene-5,6,7,8-tetrahydrofolate + NH4(+)</text>
        <dbReference type="Rhea" id="RHEA:16945"/>
        <dbReference type="Rhea" id="RHEA-COMP:10475"/>
        <dbReference type="Rhea" id="RHEA-COMP:10492"/>
        <dbReference type="ChEBI" id="CHEBI:15636"/>
        <dbReference type="ChEBI" id="CHEBI:28938"/>
        <dbReference type="ChEBI" id="CHEBI:57453"/>
        <dbReference type="ChEBI" id="CHEBI:83100"/>
        <dbReference type="ChEBI" id="CHEBI:83143"/>
        <dbReference type="EC" id="2.1.2.10"/>
    </reaction>
</comment>
<comment type="subunit">
    <text evidence="1">The glycine cleavage system is composed of four proteins: P, T, L and H.</text>
</comment>
<comment type="similarity">
    <text evidence="1">Belongs to the GcvT family.</text>
</comment>
<gene>
    <name evidence="1" type="primary">gcvT</name>
    <name type="ordered locus">Exig_0889</name>
</gene>
<keyword id="KW-0032">Aminotransferase</keyword>
<keyword id="KW-1185">Reference proteome</keyword>
<keyword id="KW-0808">Transferase</keyword>
<proteinExistence type="inferred from homology"/>
<sequence>MSQTTLKRTPLFDIIAPTGKMVDFAGFEMPVLFSSIKEEHTAVRERVGMFDVSHMGELFVSGSDALAFLQQTLSNDISKIAIGQAQYNVLCQEDGGTVDDLLVYRLDEQDYLLVVNASNIEKDEAHLRQYLTGDVLLENQSDAYGQIAVQGPKAVEVLQELTALKLEDIKFFRFAQGELAGVEMLVSRSGYTGEDGFELYMPSADASAVWNALLEADVVPCGLGARDTLRFEACLPLYGHELSATISPIEAGMGFAVKPQVKSFVGSEVLVKQKEDGPRRQLIGLELTDKGIARQDAPVLVNGETIGFVTTGTLPPTIGKAIALALVPTEYATEETFEIEVRGKKLAAKRIDTPFYRRSK</sequence>
<accession>B1YLN6</accession>
<feature type="chain" id="PRO_1000114095" description="Aminomethyltransferase">
    <location>
        <begin position="1"/>
        <end position="360"/>
    </location>
</feature>
<organism>
    <name type="scientific">Exiguobacterium sibiricum (strain DSM 17290 / CCUG 55495 / CIP 109462 / JCM 13490 / 255-15)</name>
    <dbReference type="NCBI Taxonomy" id="262543"/>
    <lineage>
        <taxon>Bacteria</taxon>
        <taxon>Bacillati</taxon>
        <taxon>Bacillota</taxon>
        <taxon>Bacilli</taxon>
        <taxon>Bacillales</taxon>
        <taxon>Bacillales Family XII. Incertae Sedis</taxon>
        <taxon>Exiguobacterium</taxon>
    </lineage>
</organism>
<dbReference type="EC" id="2.1.2.10" evidence="1"/>
<dbReference type="EMBL" id="CP001022">
    <property type="protein sequence ID" value="ACB60369.1"/>
    <property type="molecule type" value="Genomic_DNA"/>
</dbReference>
<dbReference type="RefSeq" id="WP_012369793.1">
    <property type="nucleotide sequence ID" value="NC_010556.1"/>
</dbReference>
<dbReference type="SMR" id="B1YLN6"/>
<dbReference type="STRING" id="262543.Exig_0889"/>
<dbReference type="KEGG" id="esi:Exig_0889"/>
<dbReference type="eggNOG" id="COG0404">
    <property type="taxonomic scope" value="Bacteria"/>
</dbReference>
<dbReference type="HOGENOM" id="CLU_007884_10_2_9"/>
<dbReference type="OrthoDB" id="9774591at2"/>
<dbReference type="Proteomes" id="UP000001681">
    <property type="component" value="Chromosome"/>
</dbReference>
<dbReference type="GO" id="GO:0005829">
    <property type="term" value="C:cytosol"/>
    <property type="evidence" value="ECO:0007669"/>
    <property type="project" value="TreeGrafter"/>
</dbReference>
<dbReference type="GO" id="GO:0005960">
    <property type="term" value="C:glycine cleavage complex"/>
    <property type="evidence" value="ECO:0007669"/>
    <property type="project" value="InterPro"/>
</dbReference>
<dbReference type="GO" id="GO:0004047">
    <property type="term" value="F:aminomethyltransferase activity"/>
    <property type="evidence" value="ECO:0007669"/>
    <property type="project" value="UniProtKB-UniRule"/>
</dbReference>
<dbReference type="GO" id="GO:0008483">
    <property type="term" value="F:transaminase activity"/>
    <property type="evidence" value="ECO:0007669"/>
    <property type="project" value="UniProtKB-KW"/>
</dbReference>
<dbReference type="GO" id="GO:0019464">
    <property type="term" value="P:glycine decarboxylation via glycine cleavage system"/>
    <property type="evidence" value="ECO:0007669"/>
    <property type="project" value="UniProtKB-UniRule"/>
</dbReference>
<dbReference type="FunFam" id="3.30.70.1400:FF:000001">
    <property type="entry name" value="Aminomethyltransferase"/>
    <property type="match status" value="1"/>
</dbReference>
<dbReference type="Gene3D" id="2.40.30.110">
    <property type="entry name" value="Aminomethyltransferase beta-barrel domains"/>
    <property type="match status" value="1"/>
</dbReference>
<dbReference type="Gene3D" id="3.30.70.1400">
    <property type="entry name" value="Aminomethyltransferase beta-barrel domains"/>
    <property type="match status" value="1"/>
</dbReference>
<dbReference type="Gene3D" id="4.10.1250.10">
    <property type="entry name" value="Aminomethyltransferase fragment"/>
    <property type="match status" value="1"/>
</dbReference>
<dbReference type="Gene3D" id="3.30.1360.120">
    <property type="entry name" value="Probable tRNA modification gtpase trme, domain 1"/>
    <property type="match status" value="1"/>
</dbReference>
<dbReference type="HAMAP" id="MF_00259">
    <property type="entry name" value="GcvT"/>
    <property type="match status" value="1"/>
</dbReference>
<dbReference type="InterPro" id="IPR006223">
    <property type="entry name" value="GCS_T"/>
</dbReference>
<dbReference type="InterPro" id="IPR022903">
    <property type="entry name" value="GCS_T_bac"/>
</dbReference>
<dbReference type="InterPro" id="IPR013977">
    <property type="entry name" value="GCST_C"/>
</dbReference>
<dbReference type="InterPro" id="IPR006222">
    <property type="entry name" value="GCV_T_N"/>
</dbReference>
<dbReference type="InterPro" id="IPR028896">
    <property type="entry name" value="GcvT/YgfZ/DmdA"/>
</dbReference>
<dbReference type="InterPro" id="IPR029043">
    <property type="entry name" value="GcvT/YgfZ_C"/>
</dbReference>
<dbReference type="InterPro" id="IPR027266">
    <property type="entry name" value="TrmE/GcvT_dom1"/>
</dbReference>
<dbReference type="NCBIfam" id="TIGR00528">
    <property type="entry name" value="gcvT"/>
    <property type="match status" value="1"/>
</dbReference>
<dbReference type="NCBIfam" id="NF001567">
    <property type="entry name" value="PRK00389.1"/>
    <property type="match status" value="1"/>
</dbReference>
<dbReference type="PANTHER" id="PTHR43757">
    <property type="entry name" value="AMINOMETHYLTRANSFERASE"/>
    <property type="match status" value="1"/>
</dbReference>
<dbReference type="PANTHER" id="PTHR43757:SF2">
    <property type="entry name" value="AMINOMETHYLTRANSFERASE, MITOCHONDRIAL"/>
    <property type="match status" value="1"/>
</dbReference>
<dbReference type="Pfam" id="PF01571">
    <property type="entry name" value="GCV_T"/>
    <property type="match status" value="1"/>
</dbReference>
<dbReference type="Pfam" id="PF08669">
    <property type="entry name" value="GCV_T_C"/>
    <property type="match status" value="1"/>
</dbReference>
<dbReference type="PIRSF" id="PIRSF006487">
    <property type="entry name" value="GcvT"/>
    <property type="match status" value="1"/>
</dbReference>
<dbReference type="SUPFAM" id="SSF101790">
    <property type="entry name" value="Aminomethyltransferase beta-barrel domain"/>
    <property type="match status" value="1"/>
</dbReference>
<dbReference type="SUPFAM" id="SSF103025">
    <property type="entry name" value="Folate-binding domain"/>
    <property type="match status" value="1"/>
</dbReference>
<reference key="1">
    <citation type="submission" date="2008-04" db="EMBL/GenBank/DDBJ databases">
        <title>Complete sequence of chromosome of Exiguobacterium sibiricum 255-15.</title>
        <authorList>
            <consortium name="US DOE Joint Genome Institute"/>
            <person name="Copeland A."/>
            <person name="Lucas S."/>
            <person name="Lapidus A."/>
            <person name="Glavina del Rio T."/>
            <person name="Dalin E."/>
            <person name="Tice H."/>
            <person name="Bruce D."/>
            <person name="Goodwin L."/>
            <person name="Pitluck S."/>
            <person name="Kiss H."/>
            <person name="Chertkov O."/>
            <person name="Monk C."/>
            <person name="Brettin T."/>
            <person name="Detter J.C."/>
            <person name="Han C."/>
            <person name="Kuske C.R."/>
            <person name="Schmutz J."/>
            <person name="Larimer F."/>
            <person name="Land M."/>
            <person name="Hauser L."/>
            <person name="Kyrpides N."/>
            <person name="Mikhailova N."/>
            <person name="Vishnivetskaya T."/>
            <person name="Rodrigues D.F."/>
            <person name="Gilichinsky D."/>
            <person name="Tiedje J."/>
            <person name="Richardson P."/>
        </authorList>
    </citation>
    <scope>NUCLEOTIDE SEQUENCE [LARGE SCALE GENOMIC DNA]</scope>
    <source>
        <strain>DSM 17290 / CCUG 55495 / CIP 109462 / JCM 13490 / 255-15</strain>
    </source>
</reference>
<evidence type="ECO:0000255" key="1">
    <source>
        <dbReference type="HAMAP-Rule" id="MF_00259"/>
    </source>
</evidence>